<name>HRCA_BACMK</name>
<reference key="1">
    <citation type="journal article" date="2008" name="Chem. Biol. Interact.">
        <title>Extending the Bacillus cereus group genomics to putative food-borne pathogens of different toxicity.</title>
        <authorList>
            <person name="Lapidus A."/>
            <person name="Goltsman E."/>
            <person name="Auger S."/>
            <person name="Galleron N."/>
            <person name="Segurens B."/>
            <person name="Dossat C."/>
            <person name="Land M.L."/>
            <person name="Broussolle V."/>
            <person name="Brillard J."/>
            <person name="Guinebretiere M.-H."/>
            <person name="Sanchis V."/>
            <person name="Nguen-the C."/>
            <person name="Lereclus D."/>
            <person name="Richardson P."/>
            <person name="Wincker P."/>
            <person name="Weissenbach J."/>
            <person name="Ehrlich S.D."/>
            <person name="Sorokin A."/>
        </authorList>
    </citation>
    <scope>NUCLEOTIDE SEQUENCE [LARGE SCALE GENOMIC DNA]</scope>
    <source>
        <strain>KBAB4</strain>
    </source>
</reference>
<dbReference type="EMBL" id="CP000903">
    <property type="protein sequence ID" value="ABY45328.1"/>
    <property type="molecule type" value="Genomic_DNA"/>
</dbReference>
<dbReference type="RefSeq" id="WP_002034070.1">
    <property type="nucleotide sequence ID" value="NC_010184.1"/>
</dbReference>
<dbReference type="SMR" id="A9VHU3"/>
<dbReference type="KEGG" id="bwe:BcerKBAB4_4167"/>
<dbReference type="eggNOG" id="COG1420">
    <property type="taxonomic scope" value="Bacteria"/>
</dbReference>
<dbReference type="HOGENOM" id="CLU_050019_1_0_9"/>
<dbReference type="Proteomes" id="UP000002154">
    <property type="component" value="Chromosome"/>
</dbReference>
<dbReference type="GO" id="GO:0003677">
    <property type="term" value="F:DNA binding"/>
    <property type="evidence" value="ECO:0007669"/>
    <property type="project" value="InterPro"/>
</dbReference>
<dbReference type="GO" id="GO:0045892">
    <property type="term" value="P:negative regulation of DNA-templated transcription"/>
    <property type="evidence" value="ECO:0007669"/>
    <property type="project" value="UniProtKB-UniRule"/>
</dbReference>
<dbReference type="FunFam" id="1.10.10.10:FF:000049">
    <property type="entry name" value="Heat-inducible transcription repressor HrcA"/>
    <property type="match status" value="1"/>
</dbReference>
<dbReference type="FunFam" id="3.30.390.60:FF:000001">
    <property type="entry name" value="Heat-inducible transcription repressor HrcA"/>
    <property type="match status" value="1"/>
</dbReference>
<dbReference type="Gene3D" id="3.30.450.40">
    <property type="match status" value="1"/>
</dbReference>
<dbReference type="Gene3D" id="3.30.390.60">
    <property type="entry name" value="Heat-inducible transcription repressor hrca homolog, domain 3"/>
    <property type="match status" value="1"/>
</dbReference>
<dbReference type="Gene3D" id="1.10.10.10">
    <property type="entry name" value="Winged helix-like DNA-binding domain superfamily/Winged helix DNA-binding domain"/>
    <property type="match status" value="1"/>
</dbReference>
<dbReference type="HAMAP" id="MF_00081">
    <property type="entry name" value="HrcA"/>
    <property type="match status" value="1"/>
</dbReference>
<dbReference type="InterPro" id="IPR029016">
    <property type="entry name" value="GAF-like_dom_sf"/>
</dbReference>
<dbReference type="InterPro" id="IPR002571">
    <property type="entry name" value="HrcA"/>
</dbReference>
<dbReference type="InterPro" id="IPR021153">
    <property type="entry name" value="HrcA_C"/>
</dbReference>
<dbReference type="InterPro" id="IPR036388">
    <property type="entry name" value="WH-like_DNA-bd_sf"/>
</dbReference>
<dbReference type="InterPro" id="IPR036390">
    <property type="entry name" value="WH_DNA-bd_sf"/>
</dbReference>
<dbReference type="InterPro" id="IPR023120">
    <property type="entry name" value="WHTH_transcript_rep_HrcA_IDD"/>
</dbReference>
<dbReference type="NCBIfam" id="TIGR00331">
    <property type="entry name" value="hrcA"/>
    <property type="match status" value="1"/>
</dbReference>
<dbReference type="PANTHER" id="PTHR34824">
    <property type="entry name" value="HEAT-INDUCIBLE TRANSCRIPTION REPRESSOR HRCA"/>
    <property type="match status" value="1"/>
</dbReference>
<dbReference type="PANTHER" id="PTHR34824:SF1">
    <property type="entry name" value="HEAT-INDUCIBLE TRANSCRIPTION REPRESSOR HRCA"/>
    <property type="match status" value="1"/>
</dbReference>
<dbReference type="Pfam" id="PF01628">
    <property type="entry name" value="HrcA"/>
    <property type="match status" value="1"/>
</dbReference>
<dbReference type="PIRSF" id="PIRSF005485">
    <property type="entry name" value="HrcA"/>
    <property type="match status" value="1"/>
</dbReference>
<dbReference type="SUPFAM" id="SSF55781">
    <property type="entry name" value="GAF domain-like"/>
    <property type="match status" value="1"/>
</dbReference>
<dbReference type="SUPFAM" id="SSF46785">
    <property type="entry name" value="Winged helix' DNA-binding domain"/>
    <property type="match status" value="1"/>
</dbReference>
<keyword id="KW-0678">Repressor</keyword>
<keyword id="KW-0346">Stress response</keyword>
<keyword id="KW-0804">Transcription</keyword>
<keyword id="KW-0805">Transcription regulation</keyword>
<evidence type="ECO:0000255" key="1">
    <source>
        <dbReference type="HAMAP-Rule" id="MF_00081"/>
    </source>
</evidence>
<comment type="function">
    <text evidence="1">Negative regulator of class I heat shock genes (grpE-dnaK-dnaJ and groELS operons). Prevents heat-shock induction of these operons.</text>
</comment>
<comment type="similarity">
    <text evidence="1">Belongs to the HrcA family.</text>
</comment>
<protein>
    <recommendedName>
        <fullName evidence="1">Heat-inducible transcription repressor HrcA</fullName>
    </recommendedName>
</protein>
<feature type="chain" id="PRO_1000092792" description="Heat-inducible transcription repressor HrcA">
    <location>
        <begin position="1"/>
        <end position="338"/>
    </location>
</feature>
<gene>
    <name evidence="1" type="primary">hrcA</name>
    <name type="ordered locus">BcerKBAB4_4167</name>
</gene>
<proteinExistence type="inferred from homology"/>
<organism>
    <name type="scientific">Bacillus mycoides (strain KBAB4)</name>
    <name type="common">Bacillus weihenstephanensis</name>
    <dbReference type="NCBI Taxonomy" id="315730"/>
    <lineage>
        <taxon>Bacteria</taxon>
        <taxon>Bacillati</taxon>
        <taxon>Bacillota</taxon>
        <taxon>Bacilli</taxon>
        <taxon>Bacillales</taxon>
        <taxon>Bacillaceae</taxon>
        <taxon>Bacillus</taxon>
        <taxon>Bacillus cereus group</taxon>
    </lineage>
</organism>
<accession>A9VHU3</accession>
<sequence>MLTERQLLILQTIVDDFIGSAQPVGSRTLAKKDEITFSPATIRNEMADLEELGFIEKTHSSSGRVPSEKGYRFYVDHLLAPQNLPTDEIVQIKDLFAERIFEAEKIAQQSAQILSELTNYTAIVLGPKLSTNKLKNVQIVPLDRQTAVAIIVTDTGHVQSKTITVPESVDLSDLEKMVNILNEKLSGIPMAELHNKIFKEIVTVLRGYVHNYDSAIKMLDGTFQVPLSEKIYFGGKANMLSQPEFHDIHKVRSLLTMIDNEAAFYDILRHKQVGIQVKIGRENSSTAMEDCSLISATYSIGEEQLGTIAILGPTRMQYSRVISLLQLFTRQFTDGLKK</sequence>